<keyword id="KW-1015">Disulfide bond</keyword>
<keyword id="KW-0872">Ion channel impairing toxin</keyword>
<keyword id="KW-0528">Neurotoxin</keyword>
<keyword id="KW-0646">Protease inhibitor</keyword>
<keyword id="KW-0964">Secreted</keyword>
<keyword id="KW-0722">Serine protease inhibitor</keyword>
<keyword id="KW-0732">Signal</keyword>
<keyword id="KW-0800">Toxin</keyword>
<proteinExistence type="evidence at transcript level"/>
<name>TU91_IOTOL</name>
<dbReference type="SMR" id="P0DKM7"/>
<dbReference type="GO" id="GO:0005576">
    <property type="term" value="C:extracellular region"/>
    <property type="evidence" value="ECO:0007669"/>
    <property type="project" value="UniProtKB-SubCell"/>
</dbReference>
<dbReference type="GO" id="GO:0099106">
    <property type="term" value="F:ion channel regulator activity"/>
    <property type="evidence" value="ECO:0007669"/>
    <property type="project" value="UniProtKB-KW"/>
</dbReference>
<dbReference type="GO" id="GO:0004867">
    <property type="term" value="F:serine-type endopeptidase inhibitor activity"/>
    <property type="evidence" value="ECO:0007669"/>
    <property type="project" value="UniProtKB-KW"/>
</dbReference>
<dbReference type="GO" id="GO:0090729">
    <property type="term" value="F:toxin activity"/>
    <property type="evidence" value="ECO:0007669"/>
    <property type="project" value="UniProtKB-KW"/>
</dbReference>
<dbReference type="GO" id="GO:0030154">
    <property type="term" value="P:cell differentiation"/>
    <property type="evidence" value="ECO:0007669"/>
    <property type="project" value="TreeGrafter"/>
</dbReference>
<dbReference type="CDD" id="cd00104">
    <property type="entry name" value="KAZAL_FS"/>
    <property type="match status" value="1"/>
</dbReference>
<dbReference type="Gene3D" id="3.30.60.30">
    <property type="match status" value="1"/>
</dbReference>
<dbReference type="InterPro" id="IPR002350">
    <property type="entry name" value="Kazal_dom"/>
</dbReference>
<dbReference type="InterPro" id="IPR036058">
    <property type="entry name" value="Kazal_dom_sf"/>
</dbReference>
<dbReference type="InterPro" id="IPR001239">
    <property type="entry name" value="Prot_inh_Kazal-m"/>
</dbReference>
<dbReference type="InterPro" id="IPR050653">
    <property type="entry name" value="Prot_Inhib_GrowthFact_Antg"/>
</dbReference>
<dbReference type="PANTHER" id="PTHR10913:SF45">
    <property type="entry name" value="FOLLISTATIN, ISOFORM A-RELATED"/>
    <property type="match status" value="1"/>
</dbReference>
<dbReference type="PANTHER" id="PTHR10913">
    <property type="entry name" value="FOLLISTATIN-RELATED"/>
    <property type="match status" value="1"/>
</dbReference>
<dbReference type="Pfam" id="PF00050">
    <property type="entry name" value="Kazal_1"/>
    <property type="match status" value="1"/>
</dbReference>
<dbReference type="PRINTS" id="PR00290">
    <property type="entry name" value="KAZALINHBTR"/>
</dbReference>
<dbReference type="SMART" id="SM00280">
    <property type="entry name" value="KAZAL"/>
    <property type="match status" value="1"/>
</dbReference>
<dbReference type="SUPFAM" id="SSF100895">
    <property type="entry name" value="Kazal-type serine protease inhibitors"/>
    <property type="match status" value="1"/>
</dbReference>
<dbReference type="PROSITE" id="PS51465">
    <property type="entry name" value="KAZAL_2"/>
    <property type="match status" value="1"/>
</dbReference>
<evidence type="ECO:0000250" key="1"/>
<evidence type="ECO:0000255" key="2"/>
<evidence type="ECO:0000255" key="3">
    <source>
        <dbReference type="PROSITE-ProRule" id="PRU00798"/>
    </source>
</evidence>
<evidence type="ECO:0000305" key="4"/>
<accession>P0DKM7</accession>
<reference key="1">
    <citation type="journal article" date="2006" name="J. Mol. Evol.">
        <title>Genes expressed in a turrid venom duct: divergence and similarity to conotoxins.</title>
        <authorList>
            <person name="Watkins M."/>
            <person name="Hillyard D.R."/>
            <person name="Olivera B.M."/>
        </authorList>
    </citation>
    <scope>NUCLEOTIDE SEQUENCE [MRNA]</scope>
    <source>
        <tissue>Venom duct</tissue>
    </source>
</reference>
<organism>
    <name type="scientific">Iotyrris olangoensis</name>
    <name type="common">Sea snail</name>
    <name type="synonym">Lophiotoma olangoensis</name>
    <dbReference type="NCBI Taxonomy" id="2420066"/>
    <lineage>
        <taxon>Eukaryota</taxon>
        <taxon>Metazoa</taxon>
        <taxon>Spiralia</taxon>
        <taxon>Lophotrochozoa</taxon>
        <taxon>Mollusca</taxon>
        <taxon>Gastropoda</taxon>
        <taxon>Caenogastropoda</taxon>
        <taxon>Neogastropoda</taxon>
        <taxon>Conoidea</taxon>
        <taxon>Turridae</taxon>
        <taxon>Iotyrris</taxon>
    </lineage>
</organism>
<comment type="function">
    <text evidence="1">Acts as a neurotoxin by inhibiting an ion channel (By similarity). May also act as a serine protease inhibitor, since it possess the kazal serine protease inhibitor signature.</text>
</comment>
<comment type="subcellular location">
    <subcellularLocation>
        <location evidence="1">Secreted</location>
    </subcellularLocation>
</comment>
<comment type="tissue specificity">
    <text>Expressed by the venom duct.</text>
</comment>
<comment type="domain">
    <text>The cysteine framework is IX (C-C-C-C-C-C).</text>
</comment>
<comment type="similarity">
    <text evidence="4">Belongs to the conopeptide P-like superfamily.</text>
</comment>
<feature type="signal peptide" evidence="2">
    <location>
        <begin position="1"/>
        <end position="20"/>
    </location>
</feature>
<feature type="chain" id="PRO_0000419841" description="Turripeptide Lol9.1">
    <location>
        <begin position="21"/>
        <end position="70"/>
    </location>
</feature>
<feature type="domain" description="Kazal-like" evidence="3">
    <location>
        <begin position="21"/>
        <end position="70"/>
    </location>
</feature>
<feature type="site" description="Reactive bond" evidence="3">
    <location>
        <begin position="32"/>
        <end position="33"/>
    </location>
</feature>
<feature type="disulfide bond" evidence="3">
    <location>
        <begin position="26"/>
        <end position="56"/>
    </location>
</feature>
<feature type="disulfide bond" evidence="3">
    <location>
        <begin position="30"/>
        <end position="49"/>
    </location>
</feature>
<feature type="disulfide bond" evidence="3">
    <location>
        <begin position="38"/>
        <end position="70"/>
    </location>
</feature>
<sequence>MKVYCLLLVLLVGLVSQAHGKPTKRCLSVCSAEYEPVCGSDGKTYANKCHLMTEACWSPTSITLVHEGKC</sequence>
<protein>
    <recommendedName>
        <fullName>Turripeptide Lol9.1</fullName>
    </recommendedName>
    <alternativeName>
        <fullName>Turripeptide OL11</fullName>
    </alternativeName>
</protein>